<feature type="chain" id="PRO_0000185825" description="Glutathione S-transferase Mu 5">
    <location>
        <begin position="1"/>
        <end position="218"/>
    </location>
</feature>
<feature type="domain" description="GST N-terminal">
    <location>
        <begin position="2"/>
        <end position="88"/>
    </location>
</feature>
<feature type="domain" description="GST C-terminal">
    <location>
        <begin position="90"/>
        <end position="207"/>
    </location>
</feature>
<feature type="binding site" evidence="2">
    <location>
        <begin position="7"/>
        <end position="8"/>
    </location>
    <ligand>
        <name>glutathione</name>
        <dbReference type="ChEBI" id="CHEBI:57925"/>
    </ligand>
</feature>
<feature type="binding site" evidence="2">
    <location>
        <begin position="46"/>
        <end position="50"/>
    </location>
    <ligand>
        <name>glutathione</name>
        <dbReference type="ChEBI" id="CHEBI:57925"/>
    </ligand>
</feature>
<feature type="binding site" evidence="2">
    <location>
        <begin position="59"/>
        <end position="60"/>
    </location>
    <ligand>
        <name>glutathione</name>
        <dbReference type="ChEBI" id="CHEBI:57925"/>
    </ligand>
</feature>
<feature type="binding site" evidence="2">
    <location>
        <begin position="72"/>
        <end position="73"/>
    </location>
    <ligand>
        <name>glutathione</name>
        <dbReference type="ChEBI" id="CHEBI:57925"/>
    </ligand>
</feature>
<feature type="binding site" evidence="1">
    <location>
        <position position="116"/>
    </location>
    <ligand>
        <name>substrate</name>
    </ligand>
</feature>
<feature type="sequence variant" id="VAR_065098" description="In dbSNP:rs17854972." evidence="4 5">
    <original>A</original>
    <variation>T</variation>
    <location>
        <position position="67"/>
    </location>
</feature>
<feature type="sequence variant" id="VAR_049491" description="In dbSNP:rs2227963.">
    <original>L</original>
    <variation>P</variation>
    <location>
        <position position="179"/>
    </location>
</feature>
<feature type="sequence conflict" description="In Ref. 1; AAA20040." evidence="6" ref="1">
    <original>L</original>
    <variation>M</variation>
    <location>
        <position position="35"/>
    </location>
</feature>
<proteinExistence type="evidence at protein level"/>
<sequence length="218" mass="25675">MPMTLGYWDIRGLAHAIRLLLEYTDSSYVEKKYTLGDAPDYDRSQWLNEKFKLGLDFPNLPYLIDGAHKITQSNAILRYIARKHNLCGETEEEKIRVDILENQVMDNHMELVRLCYDPDFEKLKPKYLEELPEKLKLYSEFLGKRPWFAGDKITFVDFLAYDVLDMKRIFEPKCLDAFLNLKDFISRFEGLKKISAYMKSSQFLRGLLFGKSATWNSK</sequence>
<dbReference type="EC" id="2.5.1.18"/>
<dbReference type="EMBL" id="L02321">
    <property type="protein sequence ID" value="AAA20040.1"/>
    <property type="molecule type" value="mRNA"/>
</dbReference>
<dbReference type="EMBL" id="AK289673">
    <property type="protein sequence ID" value="BAF82362.1"/>
    <property type="molecule type" value="mRNA"/>
</dbReference>
<dbReference type="EMBL" id="BC058881">
    <property type="protein sequence ID" value="AAH58881.1"/>
    <property type="molecule type" value="mRNA"/>
</dbReference>
<dbReference type="CCDS" id="CCDS811.1"/>
<dbReference type="PIR" id="A46048">
    <property type="entry name" value="A46048"/>
</dbReference>
<dbReference type="RefSeq" id="NP_000842.2">
    <property type="nucleotide sequence ID" value="NM_000851.3"/>
</dbReference>
<dbReference type="RefSeq" id="XP_005270841.1">
    <property type="nucleotide sequence ID" value="XM_005270784.5"/>
</dbReference>
<dbReference type="RefSeq" id="XP_054192143.1">
    <property type="nucleotide sequence ID" value="XM_054336168.1"/>
</dbReference>
<dbReference type="SMR" id="P46439"/>
<dbReference type="BioGRID" id="109204">
    <property type="interactions" value="17"/>
</dbReference>
<dbReference type="FunCoup" id="P46439">
    <property type="interactions" value="170"/>
</dbReference>
<dbReference type="IntAct" id="P46439">
    <property type="interactions" value="14"/>
</dbReference>
<dbReference type="STRING" id="9606.ENSP00000256593"/>
<dbReference type="ChEMBL" id="CHEMBL2819"/>
<dbReference type="DrugBank" id="DB00321">
    <property type="generic name" value="Amitriptyline"/>
</dbReference>
<dbReference type="DrugBank" id="DB00291">
    <property type="generic name" value="Chlorambucil"/>
</dbReference>
<dbReference type="DrugBank" id="DB03619">
    <property type="generic name" value="Deoxycholic acid"/>
</dbReference>
<dbReference type="DrugBank" id="DB00143">
    <property type="generic name" value="Glutathione"/>
</dbReference>
<dbReference type="DrugBank" id="DB03310">
    <property type="generic name" value="Glutathione disulfide"/>
</dbReference>
<dbReference type="DrugBank" id="DB14924">
    <property type="generic name" value="Ritlecitinib"/>
</dbReference>
<dbReference type="iPTMnet" id="P46439"/>
<dbReference type="PhosphoSitePlus" id="P46439"/>
<dbReference type="BioMuta" id="GSTM5"/>
<dbReference type="DMDM" id="67476963"/>
<dbReference type="jPOST" id="P46439"/>
<dbReference type="MassIVE" id="P46439"/>
<dbReference type="PaxDb" id="9606-ENSP00000256593"/>
<dbReference type="PeptideAtlas" id="P46439"/>
<dbReference type="ProteomicsDB" id="55739"/>
<dbReference type="Antibodypedia" id="20076">
    <property type="antibodies" value="194 antibodies from 30 providers"/>
</dbReference>
<dbReference type="DNASU" id="2949"/>
<dbReference type="Ensembl" id="ENST00000256593.8">
    <property type="protein sequence ID" value="ENSP00000256593.3"/>
    <property type="gene ID" value="ENSG00000134201.12"/>
</dbReference>
<dbReference type="GeneID" id="2949"/>
<dbReference type="KEGG" id="hsa:2949"/>
<dbReference type="MANE-Select" id="ENST00000256593.8">
    <property type="protein sequence ID" value="ENSP00000256593.3"/>
    <property type="RefSeq nucleotide sequence ID" value="NM_000851.4"/>
    <property type="RefSeq protein sequence ID" value="NP_000842.2"/>
</dbReference>
<dbReference type="AGR" id="HGNC:4637"/>
<dbReference type="CTD" id="2949"/>
<dbReference type="DisGeNET" id="2949"/>
<dbReference type="GeneCards" id="GSTM5"/>
<dbReference type="HGNC" id="HGNC:4637">
    <property type="gene designation" value="GSTM5"/>
</dbReference>
<dbReference type="HPA" id="ENSG00000134201">
    <property type="expression patterns" value="Tissue enriched (breast)"/>
</dbReference>
<dbReference type="MIM" id="138385">
    <property type="type" value="gene"/>
</dbReference>
<dbReference type="neXtProt" id="NX_P46439"/>
<dbReference type="OpenTargets" id="ENSG00000134201"/>
<dbReference type="PharmGKB" id="PA29027"/>
<dbReference type="VEuPathDB" id="HostDB:ENSG00000134201"/>
<dbReference type="eggNOG" id="KOG1695">
    <property type="taxonomic scope" value="Eukaryota"/>
</dbReference>
<dbReference type="GeneTree" id="ENSGT00940000155416"/>
<dbReference type="HOGENOM" id="CLU_039475_2_0_1"/>
<dbReference type="InParanoid" id="P46439"/>
<dbReference type="OMA" id="ADFIMYE"/>
<dbReference type="OrthoDB" id="4951845at2759"/>
<dbReference type="PAN-GO" id="P46439">
    <property type="GO annotations" value="2 GO annotations based on evolutionary models"/>
</dbReference>
<dbReference type="PhylomeDB" id="P46439"/>
<dbReference type="TreeFam" id="TF353040"/>
<dbReference type="BRENDA" id="2.5.1.18">
    <property type="organism ID" value="2681"/>
</dbReference>
<dbReference type="PathwayCommons" id="P46439"/>
<dbReference type="Reactome" id="R-HSA-156590">
    <property type="pathway name" value="Glutathione conjugation"/>
</dbReference>
<dbReference type="SABIO-RK" id="P46439"/>
<dbReference type="SignaLink" id="P46439"/>
<dbReference type="BioGRID-ORCS" id="2949">
    <property type="hits" value="6 hits in 1143 CRISPR screens"/>
</dbReference>
<dbReference type="GenomeRNAi" id="2949"/>
<dbReference type="Pharos" id="P46439">
    <property type="development level" value="Tbio"/>
</dbReference>
<dbReference type="PRO" id="PR:P46439"/>
<dbReference type="Proteomes" id="UP000005640">
    <property type="component" value="Chromosome 1"/>
</dbReference>
<dbReference type="RNAct" id="P46439">
    <property type="molecule type" value="protein"/>
</dbReference>
<dbReference type="Bgee" id="ENSG00000134201">
    <property type="expression patterns" value="Expressed in left ovary and 136 other cell types or tissues"/>
</dbReference>
<dbReference type="ExpressionAtlas" id="P46439">
    <property type="expression patterns" value="baseline and differential"/>
</dbReference>
<dbReference type="GO" id="GO:0005829">
    <property type="term" value="C:cytosol"/>
    <property type="evidence" value="ECO:0000314"/>
    <property type="project" value="HPA"/>
</dbReference>
<dbReference type="GO" id="GO:0045171">
    <property type="term" value="C:intercellular bridge"/>
    <property type="evidence" value="ECO:0007669"/>
    <property type="project" value="UniProtKB-ARBA"/>
</dbReference>
<dbReference type="GO" id="GO:0004364">
    <property type="term" value="F:glutathione transferase activity"/>
    <property type="evidence" value="ECO:0000314"/>
    <property type="project" value="UniProtKB"/>
</dbReference>
<dbReference type="GO" id="GO:0042802">
    <property type="term" value="F:identical protein binding"/>
    <property type="evidence" value="ECO:0000353"/>
    <property type="project" value="IntAct"/>
</dbReference>
<dbReference type="GO" id="GO:0006749">
    <property type="term" value="P:glutathione metabolic process"/>
    <property type="evidence" value="ECO:0000314"/>
    <property type="project" value="UniProtKB"/>
</dbReference>
<dbReference type="CDD" id="cd03209">
    <property type="entry name" value="GST_C_Mu"/>
    <property type="match status" value="1"/>
</dbReference>
<dbReference type="CDD" id="cd03075">
    <property type="entry name" value="GST_N_Mu"/>
    <property type="match status" value="1"/>
</dbReference>
<dbReference type="FunFam" id="1.20.1050.10:FF:000083">
    <property type="entry name" value="Glutathione S-transferase Mu 1"/>
    <property type="match status" value="1"/>
</dbReference>
<dbReference type="FunFam" id="3.40.30.10:FF:000603">
    <property type="entry name" value="Glutathione S-transferase Mu 1"/>
    <property type="match status" value="1"/>
</dbReference>
<dbReference type="Gene3D" id="1.20.1050.10">
    <property type="match status" value="1"/>
</dbReference>
<dbReference type="Gene3D" id="3.40.30.10">
    <property type="entry name" value="Glutaredoxin"/>
    <property type="match status" value="1"/>
</dbReference>
<dbReference type="InterPro" id="IPR010987">
    <property type="entry name" value="Glutathione-S-Trfase_C-like"/>
</dbReference>
<dbReference type="InterPro" id="IPR036282">
    <property type="entry name" value="Glutathione-S-Trfase_C_sf"/>
</dbReference>
<dbReference type="InterPro" id="IPR040079">
    <property type="entry name" value="Glutathione_S-Trfase"/>
</dbReference>
<dbReference type="InterPro" id="IPR004045">
    <property type="entry name" value="Glutathione_S-Trfase_N"/>
</dbReference>
<dbReference type="InterPro" id="IPR004046">
    <property type="entry name" value="GST_C"/>
</dbReference>
<dbReference type="InterPro" id="IPR003081">
    <property type="entry name" value="GST_mu"/>
</dbReference>
<dbReference type="InterPro" id="IPR050213">
    <property type="entry name" value="GST_superfamily"/>
</dbReference>
<dbReference type="InterPro" id="IPR036249">
    <property type="entry name" value="Thioredoxin-like_sf"/>
</dbReference>
<dbReference type="PANTHER" id="PTHR11571">
    <property type="entry name" value="GLUTATHIONE S-TRANSFERASE"/>
    <property type="match status" value="1"/>
</dbReference>
<dbReference type="PANTHER" id="PTHR11571:SF249">
    <property type="entry name" value="GLUTATHIONE S-TRANSFERASE MU 5"/>
    <property type="match status" value="1"/>
</dbReference>
<dbReference type="Pfam" id="PF00043">
    <property type="entry name" value="GST_C"/>
    <property type="match status" value="1"/>
</dbReference>
<dbReference type="Pfam" id="PF02798">
    <property type="entry name" value="GST_N"/>
    <property type="match status" value="1"/>
</dbReference>
<dbReference type="PRINTS" id="PR01267">
    <property type="entry name" value="GSTRNSFRASEM"/>
</dbReference>
<dbReference type="SFLD" id="SFLDG01205">
    <property type="entry name" value="AMPS.1"/>
    <property type="match status" value="1"/>
</dbReference>
<dbReference type="SFLD" id="SFLDS00019">
    <property type="entry name" value="Glutathione_Transferase_(cytos"/>
    <property type="match status" value="1"/>
</dbReference>
<dbReference type="SUPFAM" id="SSF47616">
    <property type="entry name" value="GST C-terminal domain-like"/>
    <property type="match status" value="1"/>
</dbReference>
<dbReference type="SUPFAM" id="SSF52833">
    <property type="entry name" value="Thioredoxin-like"/>
    <property type="match status" value="1"/>
</dbReference>
<dbReference type="PROSITE" id="PS50405">
    <property type="entry name" value="GST_CTER"/>
    <property type="match status" value="1"/>
</dbReference>
<dbReference type="PROSITE" id="PS50404">
    <property type="entry name" value="GST_NTER"/>
    <property type="match status" value="1"/>
</dbReference>
<gene>
    <name type="primary">GSTM5</name>
</gene>
<keyword id="KW-0963">Cytoplasm</keyword>
<keyword id="KW-1267">Proteomics identification</keyword>
<keyword id="KW-1185">Reference proteome</keyword>
<keyword id="KW-0808">Transferase</keyword>
<accession>P46439</accession>
<accession>A8K0V8</accession>
<accession>Q6PD78</accession>
<name>GSTM5_HUMAN</name>
<protein>
    <recommendedName>
        <fullName>Glutathione S-transferase Mu 5</fullName>
        <ecNumber>2.5.1.18</ecNumber>
    </recommendedName>
    <alternativeName>
        <fullName>GST class-mu 5</fullName>
    </alternativeName>
    <alternativeName>
        <fullName>GSTM5-5</fullName>
    </alternativeName>
</protein>
<evidence type="ECO:0000250" key="1"/>
<evidence type="ECO:0000250" key="2">
    <source>
        <dbReference type="UniProtKB" id="P08515"/>
    </source>
</evidence>
<evidence type="ECO:0000269" key="3">
    <source>
    </source>
</evidence>
<evidence type="ECO:0000269" key="4">
    <source>
    </source>
</evidence>
<evidence type="ECO:0000269" key="5">
    <source>
    </source>
</evidence>
<evidence type="ECO:0000305" key="6"/>
<organism>
    <name type="scientific">Homo sapiens</name>
    <name type="common">Human</name>
    <dbReference type="NCBI Taxonomy" id="9606"/>
    <lineage>
        <taxon>Eukaryota</taxon>
        <taxon>Metazoa</taxon>
        <taxon>Chordata</taxon>
        <taxon>Craniata</taxon>
        <taxon>Vertebrata</taxon>
        <taxon>Euteleostomi</taxon>
        <taxon>Mammalia</taxon>
        <taxon>Eutheria</taxon>
        <taxon>Euarchontoglires</taxon>
        <taxon>Primates</taxon>
        <taxon>Haplorrhini</taxon>
        <taxon>Catarrhini</taxon>
        <taxon>Hominidae</taxon>
        <taxon>Homo</taxon>
    </lineage>
</organism>
<comment type="function">
    <text evidence="3">Conjugation of reduced glutathione to a wide number of exogenous and endogenous hydrophobic electrophiles.</text>
</comment>
<comment type="catalytic activity">
    <reaction evidence="3">
        <text>RX + glutathione = an S-substituted glutathione + a halide anion + H(+)</text>
        <dbReference type="Rhea" id="RHEA:16437"/>
        <dbReference type="ChEBI" id="CHEBI:15378"/>
        <dbReference type="ChEBI" id="CHEBI:16042"/>
        <dbReference type="ChEBI" id="CHEBI:17792"/>
        <dbReference type="ChEBI" id="CHEBI:57925"/>
        <dbReference type="ChEBI" id="CHEBI:90779"/>
        <dbReference type="EC" id="2.5.1.18"/>
    </reaction>
</comment>
<comment type="subunit">
    <text evidence="3">Homodimer.</text>
</comment>
<comment type="interaction">
    <interactant intactId="EBI-4312072">
        <id>P46439</id>
    </interactant>
    <interactant intactId="EBI-746752">
        <id>Q9Y2J4</id>
        <label>AMOTL2</label>
    </interactant>
    <organismsDiffer>false</organismsDiffer>
    <experiments>4</experiments>
</comment>
<comment type="interaction">
    <interactant intactId="EBI-4312072">
        <id>P46439</id>
    </interactant>
    <interactant intactId="EBI-10187270">
        <id>Q9Y2J4-4</id>
        <label>AMOTL2</label>
    </interactant>
    <organismsDiffer>false</organismsDiffer>
    <experiments>3</experiments>
</comment>
<comment type="interaction">
    <interactant intactId="EBI-4312072">
        <id>P46439</id>
    </interactant>
    <interactant intactId="EBI-746309">
        <id>Q92917</id>
        <label>GPKOW</label>
    </interactant>
    <organismsDiffer>false</organismsDiffer>
    <experiments>3</experiments>
</comment>
<comment type="interaction">
    <interactant intactId="EBI-4312072">
        <id>P46439</id>
    </interactant>
    <interactant intactId="EBI-9023362">
        <id>P28161</id>
        <label>GSTM2</label>
    </interactant>
    <organismsDiffer>false</organismsDiffer>
    <experiments>8</experiments>
</comment>
<comment type="interaction">
    <interactant intactId="EBI-4312072">
        <id>P46439</id>
    </interactant>
    <interactant intactId="EBI-350350">
        <id>P21266</id>
        <label>GSTM3</label>
    </interactant>
    <organismsDiffer>false</organismsDiffer>
    <experiments>14</experiments>
</comment>
<comment type="interaction">
    <interactant intactId="EBI-4312072">
        <id>P46439</id>
    </interactant>
    <interactant intactId="EBI-10209603">
        <id>Q6FGJ9</id>
        <label>GSTM3</label>
    </interactant>
    <organismsDiffer>false</organismsDiffer>
    <experiments>3</experiments>
</comment>
<comment type="interaction">
    <interactant intactId="EBI-4312072">
        <id>P46439</id>
    </interactant>
    <interactant intactId="EBI-713363">
        <id>Q03013</id>
        <label>GSTM4</label>
    </interactant>
    <organismsDiffer>false</organismsDiffer>
    <experiments>5</experiments>
</comment>
<comment type="interaction">
    <interactant intactId="EBI-4312072">
        <id>P46439</id>
    </interactant>
    <interactant intactId="EBI-4312072">
        <id>P46439</id>
        <label>GSTM5</label>
    </interactant>
    <organismsDiffer>false</organismsDiffer>
    <experiments>8</experiments>
</comment>
<comment type="subcellular location">
    <subcellularLocation>
        <location>Cytoplasm</location>
    </subcellularLocation>
</comment>
<comment type="similarity">
    <text evidence="6">Belongs to the GST superfamily. Mu family.</text>
</comment>
<reference key="1">
    <citation type="journal article" date="1993" name="J. Biol. Chem.">
        <title>A basis for differentiating among the multiple human Mu-glutathione S-transferases and molecular cloning of brain GSTM5.</title>
        <authorList>
            <person name="Takahashi Y."/>
            <person name="Campbell E.A."/>
            <person name="Hirata Y."/>
            <person name="Takayama T."/>
            <person name="Listowsky I."/>
        </authorList>
    </citation>
    <scope>NUCLEOTIDE SEQUENCE [MRNA]</scope>
    <source>
        <tissue>Brain</tissue>
    </source>
</reference>
<reference key="2">
    <citation type="journal article" date="2004" name="Nat. Genet.">
        <title>Complete sequencing and characterization of 21,243 full-length human cDNAs.</title>
        <authorList>
            <person name="Ota T."/>
            <person name="Suzuki Y."/>
            <person name="Nishikawa T."/>
            <person name="Otsuki T."/>
            <person name="Sugiyama T."/>
            <person name="Irie R."/>
            <person name="Wakamatsu A."/>
            <person name="Hayashi K."/>
            <person name="Sato H."/>
            <person name="Nagai K."/>
            <person name="Kimura K."/>
            <person name="Makita H."/>
            <person name="Sekine M."/>
            <person name="Obayashi M."/>
            <person name="Nishi T."/>
            <person name="Shibahara T."/>
            <person name="Tanaka T."/>
            <person name="Ishii S."/>
            <person name="Yamamoto J."/>
            <person name="Saito K."/>
            <person name="Kawai Y."/>
            <person name="Isono Y."/>
            <person name="Nakamura Y."/>
            <person name="Nagahari K."/>
            <person name="Murakami K."/>
            <person name="Yasuda T."/>
            <person name="Iwayanagi T."/>
            <person name="Wagatsuma M."/>
            <person name="Shiratori A."/>
            <person name="Sudo H."/>
            <person name="Hosoiri T."/>
            <person name="Kaku Y."/>
            <person name="Kodaira H."/>
            <person name="Kondo H."/>
            <person name="Sugawara M."/>
            <person name="Takahashi M."/>
            <person name="Kanda K."/>
            <person name="Yokoi T."/>
            <person name="Furuya T."/>
            <person name="Kikkawa E."/>
            <person name="Omura Y."/>
            <person name="Abe K."/>
            <person name="Kamihara K."/>
            <person name="Katsuta N."/>
            <person name="Sato K."/>
            <person name="Tanikawa M."/>
            <person name="Yamazaki M."/>
            <person name="Ninomiya K."/>
            <person name="Ishibashi T."/>
            <person name="Yamashita H."/>
            <person name="Murakawa K."/>
            <person name="Fujimori K."/>
            <person name="Tanai H."/>
            <person name="Kimata M."/>
            <person name="Watanabe M."/>
            <person name="Hiraoka S."/>
            <person name="Chiba Y."/>
            <person name="Ishida S."/>
            <person name="Ono Y."/>
            <person name="Takiguchi S."/>
            <person name="Watanabe S."/>
            <person name="Yosida M."/>
            <person name="Hotuta T."/>
            <person name="Kusano J."/>
            <person name="Kanehori K."/>
            <person name="Takahashi-Fujii A."/>
            <person name="Hara H."/>
            <person name="Tanase T.-O."/>
            <person name="Nomura Y."/>
            <person name="Togiya S."/>
            <person name="Komai F."/>
            <person name="Hara R."/>
            <person name="Takeuchi K."/>
            <person name="Arita M."/>
            <person name="Imose N."/>
            <person name="Musashino K."/>
            <person name="Yuuki H."/>
            <person name="Oshima A."/>
            <person name="Sasaki N."/>
            <person name="Aotsuka S."/>
            <person name="Yoshikawa Y."/>
            <person name="Matsunawa H."/>
            <person name="Ichihara T."/>
            <person name="Shiohata N."/>
            <person name="Sano S."/>
            <person name="Moriya S."/>
            <person name="Momiyama H."/>
            <person name="Satoh N."/>
            <person name="Takami S."/>
            <person name="Terashima Y."/>
            <person name="Suzuki O."/>
            <person name="Nakagawa S."/>
            <person name="Senoh A."/>
            <person name="Mizoguchi H."/>
            <person name="Goto Y."/>
            <person name="Shimizu F."/>
            <person name="Wakebe H."/>
            <person name="Hishigaki H."/>
            <person name="Watanabe T."/>
            <person name="Sugiyama A."/>
            <person name="Takemoto M."/>
            <person name="Kawakami B."/>
            <person name="Yamazaki M."/>
            <person name="Watanabe K."/>
            <person name="Kumagai A."/>
            <person name="Itakura S."/>
            <person name="Fukuzumi Y."/>
            <person name="Fujimori Y."/>
            <person name="Komiyama M."/>
            <person name="Tashiro H."/>
            <person name="Tanigami A."/>
            <person name="Fujiwara T."/>
            <person name="Ono T."/>
            <person name="Yamada K."/>
            <person name="Fujii Y."/>
            <person name="Ozaki K."/>
            <person name="Hirao M."/>
            <person name="Ohmori Y."/>
            <person name="Kawabata A."/>
            <person name="Hikiji T."/>
            <person name="Kobatake N."/>
            <person name="Inagaki H."/>
            <person name="Ikema Y."/>
            <person name="Okamoto S."/>
            <person name="Okitani R."/>
            <person name="Kawakami T."/>
            <person name="Noguchi S."/>
            <person name="Itoh T."/>
            <person name="Shigeta K."/>
            <person name="Senba T."/>
            <person name="Matsumura K."/>
            <person name="Nakajima Y."/>
            <person name="Mizuno T."/>
            <person name="Morinaga M."/>
            <person name="Sasaki M."/>
            <person name="Togashi T."/>
            <person name="Oyama M."/>
            <person name="Hata H."/>
            <person name="Watanabe M."/>
            <person name="Komatsu T."/>
            <person name="Mizushima-Sugano J."/>
            <person name="Satoh T."/>
            <person name="Shirai Y."/>
            <person name="Takahashi Y."/>
            <person name="Nakagawa K."/>
            <person name="Okumura K."/>
            <person name="Nagase T."/>
            <person name="Nomura N."/>
            <person name="Kikuchi H."/>
            <person name="Masuho Y."/>
            <person name="Yamashita R."/>
            <person name="Nakai K."/>
            <person name="Yada T."/>
            <person name="Nakamura Y."/>
            <person name="Ohara O."/>
            <person name="Isogai T."/>
            <person name="Sugano S."/>
        </authorList>
    </citation>
    <scope>NUCLEOTIDE SEQUENCE [LARGE SCALE MRNA]</scope>
    <scope>VARIANT THR-67</scope>
    <source>
        <tissue>Amygdala</tissue>
    </source>
</reference>
<reference key="3">
    <citation type="journal article" date="2004" name="Genome Res.">
        <title>The status, quality, and expansion of the NIH full-length cDNA project: the Mammalian Gene Collection (MGC).</title>
        <authorList>
            <consortium name="The MGC Project Team"/>
        </authorList>
    </citation>
    <scope>NUCLEOTIDE SEQUENCE [LARGE SCALE MRNA]</scope>
    <scope>VARIANT THR-67</scope>
    <source>
        <tissue>PNS</tissue>
    </source>
</reference>
<reference key="4">
    <citation type="journal article" date="1999" name="Biochemistry">
        <title>An asparagine-phenylalanine substitution accounts for catalytic differences between hGSTM3-3 and other human class mu glutathione S-transferases.</title>
        <authorList>
            <person name="Patskovsky Y.V."/>
            <person name="Patskovska L.N."/>
            <person name="Listowsky I."/>
        </authorList>
    </citation>
    <scope>CATALYTIC ACTIVITY</scope>
    <scope>FUNCTION</scope>
    <scope>SUBUNIT</scope>
</reference>